<proteinExistence type="inferred from homology"/>
<protein>
    <recommendedName>
        <fullName evidence="1">Sugar fermentation stimulation protein homolog</fullName>
    </recommendedName>
</protein>
<feature type="chain" id="PRO_1000008022" description="Sugar fermentation stimulation protein homolog">
    <location>
        <begin position="1"/>
        <end position="234"/>
    </location>
</feature>
<sequence>MEFTPRLQQGILLRRYKRFLADVQLSDGSEITLHCPNTGSMRNCLYPGETVWFSTSDNPKRKYAHTWELMTTPDSGLIGIHSGQANTLAEEAINKGIIKELTGYDSLSREVKYGDENSRIDILLQGAQKPACYIEVKSCTLLEDGQGYFPDAVSLRGQKHLRELMHMVSQGHRAVLLFVVQHSDIFSVAPAAHIDPEYAKLLKKAVLAGVEVLAYRCEMSPTEIHLAQACVVRV</sequence>
<reference key="1">
    <citation type="submission" date="2007-02" db="EMBL/GenBank/DDBJ databases">
        <title>Complete sequence of chromosome of Shewanella baltica OS155.</title>
        <authorList>
            <consortium name="US DOE Joint Genome Institute"/>
            <person name="Copeland A."/>
            <person name="Lucas S."/>
            <person name="Lapidus A."/>
            <person name="Barry K."/>
            <person name="Detter J.C."/>
            <person name="Glavina del Rio T."/>
            <person name="Hammon N."/>
            <person name="Israni S."/>
            <person name="Dalin E."/>
            <person name="Tice H."/>
            <person name="Pitluck S."/>
            <person name="Sims D.R."/>
            <person name="Brettin T."/>
            <person name="Bruce D."/>
            <person name="Han C."/>
            <person name="Tapia R."/>
            <person name="Brainard J."/>
            <person name="Schmutz J."/>
            <person name="Larimer F."/>
            <person name="Land M."/>
            <person name="Hauser L."/>
            <person name="Kyrpides N."/>
            <person name="Mikhailova N."/>
            <person name="Brettar I."/>
            <person name="Klappenbach J."/>
            <person name="Konstantinidis K."/>
            <person name="Rodrigues J."/>
            <person name="Tiedje J."/>
            <person name="Richardson P."/>
        </authorList>
    </citation>
    <scope>NUCLEOTIDE SEQUENCE [LARGE SCALE GENOMIC DNA]</scope>
    <source>
        <strain>OS155 / ATCC BAA-1091</strain>
    </source>
</reference>
<organism>
    <name type="scientific">Shewanella baltica (strain OS155 / ATCC BAA-1091)</name>
    <dbReference type="NCBI Taxonomy" id="325240"/>
    <lineage>
        <taxon>Bacteria</taxon>
        <taxon>Pseudomonadati</taxon>
        <taxon>Pseudomonadota</taxon>
        <taxon>Gammaproteobacteria</taxon>
        <taxon>Alteromonadales</taxon>
        <taxon>Shewanellaceae</taxon>
        <taxon>Shewanella</taxon>
    </lineage>
</organism>
<gene>
    <name evidence="1" type="primary">sfsA</name>
    <name type="ordered locus">Sbal_3489</name>
</gene>
<name>SFSA_SHEB5</name>
<dbReference type="EMBL" id="CP000563">
    <property type="protein sequence ID" value="ABN62966.1"/>
    <property type="molecule type" value="Genomic_DNA"/>
</dbReference>
<dbReference type="RefSeq" id="WP_011847695.1">
    <property type="nucleotide sequence ID" value="NC_009052.1"/>
</dbReference>
<dbReference type="SMR" id="A3D8A3"/>
<dbReference type="STRING" id="325240.Sbal_3489"/>
<dbReference type="KEGG" id="sbl:Sbal_3489"/>
<dbReference type="HOGENOM" id="CLU_052299_2_0_6"/>
<dbReference type="OrthoDB" id="9802365at2"/>
<dbReference type="Proteomes" id="UP000001557">
    <property type="component" value="Chromosome"/>
</dbReference>
<dbReference type="GO" id="GO:0003677">
    <property type="term" value="F:DNA binding"/>
    <property type="evidence" value="ECO:0007669"/>
    <property type="project" value="InterPro"/>
</dbReference>
<dbReference type="CDD" id="cd22359">
    <property type="entry name" value="SfsA-like_bacterial"/>
    <property type="match status" value="1"/>
</dbReference>
<dbReference type="FunFam" id="2.40.50.580:FF:000001">
    <property type="entry name" value="Sugar fermentation stimulation protein A"/>
    <property type="match status" value="1"/>
</dbReference>
<dbReference type="FunFam" id="3.40.1350.60:FF:000001">
    <property type="entry name" value="Sugar fermentation stimulation protein A"/>
    <property type="match status" value="1"/>
</dbReference>
<dbReference type="Gene3D" id="2.40.50.580">
    <property type="match status" value="1"/>
</dbReference>
<dbReference type="Gene3D" id="3.40.1350.60">
    <property type="match status" value="1"/>
</dbReference>
<dbReference type="HAMAP" id="MF_00095">
    <property type="entry name" value="SfsA"/>
    <property type="match status" value="1"/>
</dbReference>
<dbReference type="InterPro" id="IPR005224">
    <property type="entry name" value="SfsA"/>
</dbReference>
<dbReference type="InterPro" id="IPR040452">
    <property type="entry name" value="SfsA_C"/>
</dbReference>
<dbReference type="InterPro" id="IPR041465">
    <property type="entry name" value="SfsA_N"/>
</dbReference>
<dbReference type="NCBIfam" id="TIGR00230">
    <property type="entry name" value="sfsA"/>
    <property type="match status" value="1"/>
</dbReference>
<dbReference type="PANTHER" id="PTHR30545">
    <property type="entry name" value="SUGAR FERMENTATION STIMULATION PROTEIN A"/>
    <property type="match status" value="1"/>
</dbReference>
<dbReference type="PANTHER" id="PTHR30545:SF2">
    <property type="entry name" value="SUGAR FERMENTATION STIMULATION PROTEIN A"/>
    <property type="match status" value="1"/>
</dbReference>
<dbReference type="Pfam" id="PF03749">
    <property type="entry name" value="SfsA"/>
    <property type="match status" value="1"/>
</dbReference>
<dbReference type="Pfam" id="PF17746">
    <property type="entry name" value="SfsA_N"/>
    <property type="match status" value="1"/>
</dbReference>
<comment type="similarity">
    <text evidence="1">Belongs to the SfsA family.</text>
</comment>
<accession>A3D8A3</accession>
<keyword id="KW-1185">Reference proteome</keyword>
<evidence type="ECO:0000255" key="1">
    <source>
        <dbReference type="HAMAP-Rule" id="MF_00095"/>
    </source>
</evidence>